<organism>
    <name type="scientific">Phocaeicola vulgatus (strain ATCC 8482 / DSM 1447 / JCM 5826 / CCUG 4940 / NBRC 14291 / NCTC 11154)</name>
    <name type="common">Bacteroides vulgatus</name>
    <dbReference type="NCBI Taxonomy" id="435590"/>
    <lineage>
        <taxon>Bacteria</taxon>
        <taxon>Pseudomonadati</taxon>
        <taxon>Bacteroidota</taxon>
        <taxon>Bacteroidia</taxon>
        <taxon>Bacteroidales</taxon>
        <taxon>Bacteroidaceae</taxon>
        <taxon>Phocaeicola</taxon>
    </lineage>
</organism>
<proteinExistence type="inferred from homology"/>
<comment type="function">
    <text evidence="1">An aminoacyl-tRNA editing enzyme that deacylates mischarged D-aminoacyl-tRNAs. Also deacylates mischarged glycyl-tRNA(Ala), protecting cells against glycine mischarging by AlaRS. Acts via tRNA-based rather than protein-based catalysis; rejects L-amino acids rather than detecting D-amino acids in the active site. By recycling D-aminoacyl-tRNA to D-amino acids and free tRNA molecules, this enzyme counteracts the toxicity associated with the formation of D-aminoacyl-tRNA entities in vivo and helps enforce protein L-homochirality.</text>
</comment>
<comment type="catalytic activity">
    <reaction evidence="1">
        <text>glycyl-tRNA(Ala) + H2O = tRNA(Ala) + glycine + H(+)</text>
        <dbReference type="Rhea" id="RHEA:53744"/>
        <dbReference type="Rhea" id="RHEA-COMP:9657"/>
        <dbReference type="Rhea" id="RHEA-COMP:13640"/>
        <dbReference type="ChEBI" id="CHEBI:15377"/>
        <dbReference type="ChEBI" id="CHEBI:15378"/>
        <dbReference type="ChEBI" id="CHEBI:57305"/>
        <dbReference type="ChEBI" id="CHEBI:78442"/>
        <dbReference type="ChEBI" id="CHEBI:78522"/>
        <dbReference type="EC" id="3.1.1.96"/>
    </reaction>
</comment>
<comment type="catalytic activity">
    <reaction evidence="1">
        <text>a D-aminoacyl-tRNA + H2O = a tRNA + a D-alpha-amino acid + H(+)</text>
        <dbReference type="Rhea" id="RHEA:13953"/>
        <dbReference type="Rhea" id="RHEA-COMP:10123"/>
        <dbReference type="Rhea" id="RHEA-COMP:10124"/>
        <dbReference type="ChEBI" id="CHEBI:15377"/>
        <dbReference type="ChEBI" id="CHEBI:15378"/>
        <dbReference type="ChEBI" id="CHEBI:59871"/>
        <dbReference type="ChEBI" id="CHEBI:78442"/>
        <dbReference type="ChEBI" id="CHEBI:79333"/>
        <dbReference type="EC" id="3.1.1.96"/>
    </reaction>
</comment>
<comment type="subunit">
    <text evidence="1">Homodimer.</text>
</comment>
<comment type="subcellular location">
    <subcellularLocation>
        <location evidence="1">Cytoplasm</location>
    </subcellularLocation>
</comment>
<comment type="domain">
    <text evidence="1">A Gly-cisPro motif from one monomer fits into the active site of the other monomer to allow specific chiral rejection of L-amino acids.</text>
</comment>
<comment type="similarity">
    <text evidence="1">Belongs to the DTD family.</text>
</comment>
<dbReference type="EC" id="3.1.1.96" evidence="1"/>
<dbReference type="EMBL" id="CP000139">
    <property type="protein sequence ID" value="ABR38901.1"/>
    <property type="molecule type" value="Genomic_DNA"/>
</dbReference>
<dbReference type="RefSeq" id="WP_005843922.1">
    <property type="nucleotide sequence ID" value="NZ_JANSWM010000092.1"/>
</dbReference>
<dbReference type="SMR" id="A6KZN7"/>
<dbReference type="STRING" id="435590.BVU_1211"/>
<dbReference type="PaxDb" id="435590-BVU_1211"/>
<dbReference type="GeneID" id="5302177"/>
<dbReference type="KEGG" id="bvu:BVU_1211"/>
<dbReference type="eggNOG" id="COG1490">
    <property type="taxonomic scope" value="Bacteria"/>
</dbReference>
<dbReference type="HOGENOM" id="CLU_076901_1_0_10"/>
<dbReference type="BioCyc" id="BVUL435590:G1G59-1260-MONOMER"/>
<dbReference type="Proteomes" id="UP000002861">
    <property type="component" value="Chromosome"/>
</dbReference>
<dbReference type="GO" id="GO:0005737">
    <property type="term" value="C:cytoplasm"/>
    <property type="evidence" value="ECO:0007669"/>
    <property type="project" value="UniProtKB-SubCell"/>
</dbReference>
<dbReference type="GO" id="GO:0051500">
    <property type="term" value="F:D-tyrosyl-tRNA(Tyr) deacylase activity"/>
    <property type="evidence" value="ECO:0007669"/>
    <property type="project" value="TreeGrafter"/>
</dbReference>
<dbReference type="GO" id="GO:0106026">
    <property type="term" value="F:Gly-tRNA(Ala) deacylase activity"/>
    <property type="evidence" value="ECO:0007669"/>
    <property type="project" value="UniProtKB-UniRule"/>
</dbReference>
<dbReference type="GO" id="GO:0043908">
    <property type="term" value="F:Ser(Gly)-tRNA(Ala) hydrolase activity"/>
    <property type="evidence" value="ECO:0007669"/>
    <property type="project" value="UniProtKB-UniRule"/>
</dbReference>
<dbReference type="GO" id="GO:0000049">
    <property type="term" value="F:tRNA binding"/>
    <property type="evidence" value="ECO:0007669"/>
    <property type="project" value="UniProtKB-UniRule"/>
</dbReference>
<dbReference type="GO" id="GO:0019478">
    <property type="term" value="P:D-amino acid catabolic process"/>
    <property type="evidence" value="ECO:0007669"/>
    <property type="project" value="UniProtKB-UniRule"/>
</dbReference>
<dbReference type="FunFam" id="3.50.80.10:FF:000001">
    <property type="entry name" value="D-aminoacyl-tRNA deacylase"/>
    <property type="match status" value="1"/>
</dbReference>
<dbReference type="Gene3D" id="3.50.80.10">
    <property type="entry name" value="D-tyrosyl-tRNA(Tyr) deacylase"/>
    <property type="match status" value="1"/>
</dbReference>
<dbReference type="HAMAP" id="MF_00518">
    <property type="entry name" value="Deacylase_Dtd"/>
    <property type="match status" value="1"/>
</dbReference>
<dbReference type="InterPro" id="IPR003732">
    <property type="entry name" value="Daa-tRNA_deacyls_DTD"/>
</dbReference>
<dbReference type="InterPro" id="IPR023509">
    <property type="entry name" value="DTD-like_sf"/>
</dbReference>
<dbReference type="NCBIfam" id="TIGR00256">
    <property type="entry name" value="D-aminoacyl-tRNA deacylase"/>
    <property type="match status" value="1"/>
</dbReference>
<dbReference type="PANTHER" id="PTHR10472:SF5">
    <property type="entry name" value="D-AMINOACYL-TRNA DEACYLASE 1"/>
    <property type="match status" value="1"/>
</dbReference>
<dbReference type="PANTHER" id="PTHR10472">
    <property type="entry name" value="D-TYROSYL-TRNA TYR DEACYLASE"/>
    <property type="match status" value="1"/>
</dbReference>
<dbReference type="Pfam" id="PF02580">
    <property type="entry name" value="Tyr_Deacylase"/>
    <property type="match status" value="1"/>
</dbReference>
<dbReference type="SUPFAM" id="SSF69500">
    <property type="entry name" value="DTD-like"/>
    <property type="match status" value="1"/>
</dbReference>
<feature type="chain" id="PRO_1000050813" description="D-aminoacyl-tRNA deacylase">
    <location>
        <begin position="1"/>
        <end position="150"/>
    </location>
</feature>
<feature type="short sequence motif" description="Gly-cisPro motif, important for rejection of L-amino acids" evidence="1">
    <location>
        <begin position="138"/>
        <end position="139"/>
    </location>
</feature>
<gene>
    <name evidence="1" type="primary">dtd</name>
    <name type="ordered locus">BVU_1211</name>
</gene>
<keyword id="KW-0963">Cytoplasm</keyword>
<keyword id="KW-0378">Hydrolase</keyword>
<keyword id="KW-0694">RNA-binding</keyword>
<keyword id="KW-0820">tRNA-binding</keyword>
<name>DTD_PHOV8</name>
<sequence>MRVVIQRVSHASVTIEGVCKSAIKEGFMILVGIEEADTQEDADWLCKKIIGLRVFDDENGVMNKSILEVGGNILVISQFTLHASTKKGNRPSYIRAAKHDVAIPLYNYFCQELSIGLGKEVGTGEFGADMKVELLNNGPVTICMDTKNKE</sequence>
<accession>A6KZN7</accession>
<protein>
    <recommendedName>
        <fullName evidence="1">D-aminoacyl-tRNA deacylase</fullName>
        <shortName evidence="1">DTD</shortName>
        <ecNumber evidence="1">3.1.1.96</ecNumber>
    </recommendedName>
    <alternativeName>
        <fullName evidence="1">Gly-tRNA(Ala) deacylase</fullName>
    </alternativeName>
</protein>
<evidence type="ECO:0000255" key="1">
    <source>
        <dbReference type="HAMAP-Rule" id="MF_00518"/>
    </source>
</evidence>
<reference key="1">
    <citation type="journal article" date="2007" name="PLoS Biol.">
        <title>Evolution of symbiotic bacteria in the distal human intestine.</title>
        <authorList>
            <person name="Xu J."/>
            <person name="Mahowald M.A."/>
            <person name="Ley R.E."/>
            <person name="Lozupone C.A."/>
            <person name="Hamady M."/>
            <person name="Martens E.C."/>
            <person name="Henrissat B."/>
            <person name="Coutinho P.M."/>
            <person name="Minx P."/>
            <person name="Latreille P."/>
            <person name="Cordum H."/>
            <person name="Van Brunt A."/>
            <person name="Kim K."/>
            <person name="Fulton R.S."/>
            <person name="Fulton L.A."/>
            <person name="Clifton S.W."/>
            <person name="Wilson R.K."/>
            <person name="Knight R.D."/>
            <person name="Gordon J.I."/>
        </authorList>
    </citation>
    <scope>NUCLEOTIDE SEQUENCE [LARGE SCALE GENOMIC DNA]</scope>
    <source>
        <strain>ATCC 8482 / DSM 1447 / JCM 5826 / CCUG 4940 / NBRC 14291 / NCTC 11154</strain>
    </source>
</reference>